<protein>
    <recommendedName>
        <fullName evidence="1">Deoxyribose-phosphate aldolase</fullName>
        <shortName evidence="1">DERA</shortName>
        <ecNumber evidence="1">4.1.2.4</ecNumber>
    </recommendedName>
    <alternativeName>
        <fullName evidence="1">2-deoxy-D-ribose 5-phosphate aldolase</fullName>
    </alternativeName>
    <alternativeName>
        <fullName evidence="1">Phosphodeoxyriboaldolase</fullName>
        <shortName evidence="1">Deoxyriboaldolase</shortName>
    </alternativeName>
</protein>
<accession>Q92MQ3</accession>
<gene>
    <name evidence="1" type="primary">deoC</name>
    <name type="ordered locus">R02560</name>
    <name type="ORF">SMc02333</name>
</gene>
<feature type="chain" id="PRO_0000057253" description="Deoxyribose-phosphate aldolase">
    <location>
        <begin position="1"/>
        <end position="248"/>
    </location>
</feature>
<feature type="active site" description="Proton donor/acceptor" evidence="1">
    <location>
        <position position="106"/>
    </location>
</feature>
<feature type="active site" description="Schiff-base intermediate with acetaldehyde" evidence="1">
    <location>
        <position position="168"/>
    </location>
</feature>
<feature type="active site" description="Proton donor/acceptor" evidence="1">
    <location>
        <position position="197"/>
    </location>
</feature>
<comment type="function">
    <text evidence="1">Catalyzes a reversible aldol reaction between acetaldehyde and D-glyceraldehyde 3-phosphate to generate 2-deoxy-D-ribose 5-phosphate.</text>
</comment>
<comment type="catalytic activity">
    <reaction evidence="1">
        <text>2-deoxy-D-ribose 5-phosphate = D-glyceraldehyde 3-phosphate + acetaldehyde</text>
        <dbReference type="Rhea" id="RHEA:12821"/>
        <dbReference type="ChEBI" id="CHEBI:15343"/>
        <dbReference type="ChEBI" id="CHEBI:59776"/>
        <dbReference type="ChEBI" id="CHEBI:62877"/>
        <dbReference type="EC" id="4.1.2.4"/>
    </reaction>
</comment>
<comment type="pathway">
    <text evidence="1">Carbohydrate degradation; 2-deoxy-D-ribose 1-phosphate degradation; D-glyceraldehyde 3-phosphate and acetaldehyde from 2-deoxy-alpha-D-ribose 1-phosphate: step 2/2.</text>
</comment>
<comment type="subcellular location">
    <subcellularLocation>
        <location evidence="1">Cytoplasm</location>
    </subcellularLocation>
</comment>
<comment type="similarity">
    <text evidence="1 2">Belongs to the DeoC/FbaB aldolase family. DeoC type 1 subfamily.</text>
</comment>
<dbReference type="EC" id="4.1.2.4" evidence="1"/>
<dbReference type="EMBL" id="AL591688">
    <property type="protein sequence ID" value="CAC47139.1"/>
    <property type="molecule type" value="Genomic_DNA"/>
</dbReference>
<dbReference type="RefSeq" id="NP_386666.1">
    <property type="nucleotide sequence ID" value="NC_003047.1"/>
</dbReference>
<dbReference type="RefSeq" id="WP_010970031.1">
    <property type="nucleotide sequence ID" value="NC_003047.1"/>
</dbReference>
<dbReference type="SMR" id="Q92MQ3"/>
<dbReference type="EnsemblBacteria" id="CAC47139">
    <property type="protein sequence ID" value="CAC47139"/>
    <property type="gene ID" value="SMc02333"/>
</dbReference>
<dbReference type="KEGG" id="sme:SMc02333"/>
<dbReference type="PATRIC" id="fig|266834.11.peg.4056"/>
<dbReference type="eggNOG" id="COG0274">
    <property type="taxonomic scope" value="Bacteria"/>
</dbReference>
<dbReference type="HOGENOM" id="CLU_053595_0_2_5"/>
<dbReference type="OrthoDB" id="6579831at2"/>
<dbReference type="UniPathway" id="UPA00002">
    <property type="reaction ID" value="UER00468"/>
</dbReference>
<dbReference type="Proteomes" id="UP000001976">
    <property type="component" value="Chromosome"/>
</dbReference>
<dbReference type="GO" id="GO:0005737">
    <property type="term" value="C:cytoplasm"/>
    <property type="evidence" value="ECO:0007669"/>
    <property type="project" value="UniProtKB-SubCell"/>
</dbReference>
<dbReference type="GO" id="GO:0004139">
    <property type="term" value="F:deoxyribose-phosphate aldolase activity"/>
    <property type="evidence" value="ECO:0007669"/>
    <property type="project" value="UniProtKB-UniRule"/>
</dbReference>
<dbReference type="GO" id="GO:0006018">
    <property type="term" value="P:2-deoxyribose 1-phosphate catabolic process"/>
    <property type="evidence" value="ECO:0007669"/>
    <property type="project" value="UniProtKB-UniRule"/>
</dbReference>
<dbReference type="GO" id="GO:0016052">
    <property type="term" value="P:carbohydrate catabolic process"/>
    <property type="evidence" value="ECO:0007669"/>
    <property type="project" value="TreeGrafter"/>
</dbReference>
<dbReference type="GO" id="GO:0009264">
    <property type="term" value="P:deoxyribonucleotide catabolic process"/>
    <property type="evidence" value="ECO:0007669"/>
    <property type="project" value="InterPro"/>
</dbReference>
<dbReference type="CDD" id="cd00959">
    <property type="entry name" value="DeoC"/>
    <property type="match status" value="1"/>
</dbReference>
<dbReference type="Gene3D" id="3.20.20.70">
    <property type="entry name" value="Aldolase class I"/>
    <property type="match status" value="1"/>
</dbReference>
<dbReference type="HAMAP" id="MF_00114">
    <property type="entry name" value="DeoC_type1"/>
    <property type="match status" value="1"/>
</dbReference>
<dbReference type="InterPro" id="IPR013785">
    <property type="entry name" value="Aldolase_TIM"/>
</dbReference>
<dbReference type="InterPro" id="IPR011343">
    <property type="entry name" value="DeoC"/>
</dbReference>
<dbReference type="InterPro" id="IPR002915">
    <property type="entry name" value="DeoC/FbaB/LacD_aldolase"/>
</dbReference>
<dbReference type="InterPro" id="IPR028581">
    <property type="entry name" value="DeoC_typeI"/>
</dbReference>
<dbReference type="NCBIfam" id="TIGR00126">
    <property type="entry name" value="deoC"/>
    <property type="match status" value="1"/>
</dbReference>
<dbReference type="PANTHER" id="PTHR10889">
    <property type="entry name" value="DEOXYRIBOSE-PHOSPHATE ALDOLASE"/>
    <property type="match status" value="1"/>
</dbReference>
<dbReference type="PANTHER" id="PTHR10889:SF1">
    <property type="entry name" value="DEOXYRIBOSE-PHOSPHATE ALDOLASE"/>
    <property type="match status" value="1"/>
</dbReference>
<dbReference type="Pfam" id="PF01791">
    <property type="entry name" value="DeoC"/>
    <property type="match status" value="1"/>
</dbReference>
<dbReference type="PIRSF" id="PIRSF001357">
    <property type="entry name" value="DeoC"/>
    <property type="match status" value="1"/>
</dbReference>
<dbReference type="SMART" id="SM01133">
    <property type="entry name" value="DeoC"/>
    <property type="match status" value="1"/>
</dbReference>
<dbReference type="SUPFAM" id="SSF51569">
    <property type="entry name" value="Aldolase"/>
    <property type="match status" value="1"/>
</dbReference>
<name>DEOC_RHIME</name>
<organism>
    <name type="scientific">Rhizobium meliloti (strain 1021)</name>
    <name type="common">Ensifer meliloti</name>
    <name type="synonym">Sinorhizobium meliloti</name>
    <dbReference type="NCBI Taxonomy" id="266834"/>
    <lineage>
        <taxon>Bacteria</taxon>
        <taxon>Pseudomonadati</taxon>
        <taxon>Pseudomonadota</taxon>
        <taxon>Alphaproteobacteria</taxon>
        <taxon>Hyphomicrobiales</taxon>
        <taxon>Rhizobiaceae</taxon>
        <taxon>Sinorhizobium/Ensifer group</taxon>
        <taxon>Sinorhizobium</taxon>
    </lineage>
</organism>
<proteinExistence type="inferred from homology"/>
<evidence type="ECO:0000255" key="1">
    <source>
        <dbReference type="HAMAP-Rule" id="MF_00114"/>
    </source>
</evidence>
<evidence type="ECO:0000305" key="2"/>
<keyword id="KW-0963">Cytoplasm</keyword>
<keyword id="KW-0456">Lyase</keyword>
<keyword id="KW-1185">Reference proteome</keyword>
<keyword id="KW-0704">Schiff base</keyword>
<sequence>MNNISNRRQPPASLAPRDLAALIDISAVQAFHTEADVRELAGIAVAEGFIAAHALPNFVPLLRSLVPSGGLTLVGGPVGFPSGGHSTRTKTAEAVELAENGAQELDMMINVGRIKSGDFGYVRSEIRAIVEAIAPVPLKVILELAHLTDEEIRAASAIVAESGAAFVKTGTGWTPSATTLEKLKLIVETVGGAVEIKASGGIRSLDAIAGMMRLGVTRFGINTQVAVDLVRQCAALPGGRLDIAGKAG</sequence>
<reference key="1">
    <citation type="journal article" date="2001" name="Proc. Natl. Acad. Sci. U.S.A.">
        <title>Analysis of the chromosome sequence of the legume symbiont Sinorhizobium meliloti strain 1021.</title>
        <authorList>
            <person name="Capela D."/>
            <person name="Barloy-Hubler F."/>
            <person name="Gouzy J."/>
            <person name="Bothe G."/>
            <person name="Ampe F."/>
            <person name="Batut J."/>
            <person name="Boistard P."/>
            <person name="Becker A."/>
            <person name="Boutry M."/>
            <person name="Cadieu E."/>
            <person name="Dreano S."/>
            <person name="Gloux S."/>
            <person name="Godrie T."/>
            <person name="Goffeau A."/>
            <person name="Kahn D."/>
            <person name="Kiss E."/>
            <person name="Lelaure V."/>
            <person name="Masuy D."/>
            <person name="Pohl T."/>
            <person name="Portetelle D."/>
            <person name="Puehler A."/>
            <person name="Purnelle B."/>
            <person name="Ramsperger U."/>
            <person name="Renard C."/>
            <person name="Thebault P."/>
            <person name="Vandenbol M."/>
            <person name="Weidner S."/>
            <person name="Galibert F."/>
        </authorList>
    </citation>
    <scope>NUCLEOTIDE SEQUENCE [LARGE SCALE GENOMIC DNA]</scope>
    <source>
        <strain>1021</strain>
    </source>
</reference>
<reference key="2">
    <citation type="journal article" date="2001" name="Science">
        <title>The composite genome of the legume symbiont Sinorhizobium meliloti.</title>
        <authorList>
            <person name="Galibert F."/>
            <person name="Finan T.M."/>
            <person name="Long S.R."/>
            <person name="Puehler A."/>
            <person name="Abola P."/>
            <person name="Ampe F."/>
            <person name="Barloy-Hubler F."/>
            <person name="Barnett M.J."/>
            <person name="Becker A."/>
            <person name="Boistard P."/>
            <person name="Bothe G."/>
            <person name="Boutry M."/>
            <person name="Bowser L."/>
            <person name="Buhrmester J."/>
            <person name="Cadieu E."/>
            <person name="Capela D."/>
            <person name="Chain P."/>
            <person name="Cowie A."/>
            <person name="Davis R.W."/>
            <person name="Dreano S."/>
            <person name="Federspiel N.A."/>
            <person name="Fisher R.F."/>
            <person name="Gloux S."/>
            <person name="Godrie T."/>
            <person name="Goffeau A."/>
            <person name="Golding B."/>
            <person name="Gouzy J."/>
            <person name="Gurjal M."/>
            <person name="Hernandez-Lucas I."/>
            <person name="Hong A."/>
            <person name="Huizar L."/>
            <person name="Hyman R.W."/>
            <person name="Jones T."/>
            <person name="Kahn D."/>
            <person name="Kahn M.L."/>
            <person name="Kalman S."/>
            <person name="Keating D.H."/>
            <person name="Kiss E."/>
            <person name="Komp C."/>
            <person name="Lelaure V."/>
            <person name="Masuy D."/>
            <person name="Palm C."/>
            <person name="Peck M.C."/>
            <person name="Pohl T.M."/>
            <person name="Portetelle D."/>
            <person name="Purnelle B."/>
            <person name="Ramsperger U."/>
            <person name="Surzycki R."/>
            <person name="Thebault P."/>
            <person name="Vandenbol M."/>
            <person name="Vorhoelter F.J."/>
            <person name="Weidner S."/>
            <person name="Wells D.H."/>
            <person name="Wong K."/>
            <person name="Yeh K.-C."/>
            <person name="Batut J."/>
        </authorList>
    </citation>
    <scope>NUCLEOTIDE SEQUENCE [LARGE SCALE GENOMIC DNA]</scope>
    <source>
        <strain>1021</strain>
    </source>
</reference>